<evidence type="ECO:0000250" key="1"/>
<evidence type="ECO:0000269" key="2">
    <source>
    </source>
</evidence>
<evidence type="ECO:0000305" key="3"/>
<evidence type="ECO:0007829" key="4">
    <source>
        <dbReference type="PDB" id="3FSL"/>
    </source>
</evidence>
<evidence type="ECO:0007829" key="5">
    <source>
        <dbReference type="PDB" id="3TAT"/>
    </source>
</evidence>
<dbReference type="EC" id="2.6.1.57"/>
<dbReference type="EC" id="2.6.1.107"/>
<dbReference type="EMBL" id="X03628">
    <property type="protein sequence ID" value="CAA27278.1"/>
    <property type="molecule type" value="Genomic_DNA"/>
</dbReference>
<dbReference type="EMBL" id="M12047">
    <property type="protein sequence ID" value="AAA24703.1"/>
    <property type="molecule type" value="Genomic_DNA"/>
</dbReference>
<dbReference type="EMBL" id="U00006">
    <property type="protein sequence ID" value="AAC43148.1"/>
    <property type="molecule type" value="Genomic_DNA"/>
</dbReference>
<dbReference type="EMBL" id="U00096">
    <property type="protein sequence ID" value="AAC77024.1"/>
    <property type="molecule type" value="Genomic_DNA"/>
</dbReference>
<dbReference type="EMBL" id="AP009048">
    <property type="protein sequence ID" value="BAE78056.1"/>
    <property type="molecule type" value="Genomic_DNA"/>
</dbReference>
<dbReference type="EMBL" id="M17809">
    <property type="protein sequence ID" value="AAA24704.1"/>
    <property type="molecule type" value="Genomic_DNA"/>
</dbReference>
<dbReference type="PIR" id="A30379">
    <property type="entry name" value="XNECY"/>
</dbReference>
<dbReference type="RefSeq" id="NP_418478.1">
    <property type="nucleotide sequence ID" value="NC_000913.3"/>
</dbReference>
<dbReference type="RefSeq" id="WP_000486985.1">
    <property type="nucleotide sequence ID" value="NZ_SSZK01000016.1"/>
</dbReference>
<dbReference type="PDB" id="3FSL">
    <property type="method" value="X-ray"/>
    <property type="resolution" value="2.35 A"/>
    <property type="chains" value="A/B/C/D/E/F=1-397"/>
</dbReference>
<dbReference type="PDB" id="3TAT">
    <property type="method" value="X-ray"/>
    <property type="resolution" value="3.50 A"/>
    <property type="chains" value="A/B/C/D/E/F=1-397"/>
</dbReference>
<dbReference type="PDBsum" id="3FSL"/>
<dbReference type="PDBsum" id="3TAT"/>
<dbReference type="SMR" id="P04693"/>
<dbReference type="BioGRID" id="4262667">
    <property type="interactions" value="11"/>
</dbReference>
<dbReference type="FunCoup" id="P04693">
    <property type="interactions" value="393"/>
</dbReference>
<dbReference type="IntAct" id="P04693">
    <property type="interactions" value="2"/>
</dbReference>
<dbReference type="STRING" id="511145.b4054"/>
<dbReference type="jPOST" id="P04693"/>
<dbReference type="PaxDb" id="511145-b4054"/>
<dbReference type="EnsemblBacteria" id="AAC77024">
    <property type="protein sequence ID" value="AAC77024"/>
    <property type="gene ID" value="b4054"/>
</dbReference>
<dbReference type="GeneID" id="948563"/>
<dbReference type="KEGG" id="ecj:JW4014"/>
<dbReference type="KEGG" id="eco:b4054"/>
<dbReference type="KEGG" id="ecoc:C3026_21905"/>
<dbReference type="PATRIC" id="fig|511145.12.peg.4173"/>
<dbReference type="EchoBASE" id="EB1033"/>
<dbReference type="eggNOG" id="COG1448">
    <property type="taxonomic scope" value="Bacteria"/>
</dbReference>
<dbReference type="HOGENOM" id="CLU_032440_1_2_6"/>
<dbReference type="InParanoid" id="P04693"/>
<dbReference type="OMA" id="GTWTHIT"/>
<dbReference type="OrthoDB" id="9766445at2"/>
<dbReference type="PhylomeDB" id="P04693"/>
<dbReference type="BioCyc" id="EcoCyc:TYRB-MONOMER"/>
<dbReference type="BioCyc" id="MetaCyc:TYRB-MONOMER"/>
<dbReference type="BRENDA" id="2.6.1.57">
    <property type="organism ID" value="2026"/>
</dbReference>
<dbReference type="UniPathway" id="UPA00121">
    <property type="reaction ID" value="UER00347"/>
</dbReference>
<dbReference type="UniPathway" id="UPA00122">
    <property type="reaction ID" value="UER00350"/>
</dbReference>
<dbReference type="EvolutionaryTrace" id="P04693"/>
<dbReference type="PRO" id="PR:P04693"/>
<dbReference type="Proteomes" id="UP000000625">
    <property type="component" value="Chromosome"/>
</dbReference>
<dbReference type="GO" id="GO:0005737">
    <property type="term" value="C:cytoplasm"/>
    <property type="evidence" value="ECO:0000314"/>
    <property type="project" value="EcoliWiki"/>
</dbReference>
<dbReference type="GO" id="GO:0005829">
    <property type="term" value="C:cytosol"/>
    <property type="evidence" value="ECO:0000314"/>
    <property type="project" value="EcoCyc"/>
</dbReference>
<dbReference type="GO" id="GO:0008793">
    <property type="term" value="F:aromatic-amino-acid transaminase activity"/>
    <property type="evidence" value="ECO:0000314"/>
    <property type="project" value="EcoCyc"/>
</dbReference>
<dbReference type="GO" id="GO:0042802">
    <property type="term" value="F:identical protein binding"/>
    <property type="evidence" value="ECO:0000318"/>
    <property type="project" value="GO_Central"/>
</dbReference>
<dbReference type="GO" id="GO:0004838">
    <property type="term" value="F:L-tyrosine-2-oxoglutarate transaminase activity"/>
    <property type="evidence" value="ECO:0000314"/>
    <property type="project" value="EcoCyc"/>
</dbReference>
<dbReference type="GO" id="GO:0042803">
    <property type="term" value="F:protein homodimerization activity"/>
    <property type="evidence" value="ECO:0000314"/>
    <property type="project" value="EcoCyc"/>
</dbReference>
<dbReference type="GO" id="GO:0030170">
    <property type="term" value="F:pyridoxal phosphate binding"/>
    <property type="evidence" value="ECO:0000314"/>
    <property type="project" value="EcoliWiki"/>
</dbReference>
<dbReference type="GO" id="GO:0006532">
    <property type="term" value="P:aspartate biosynthetic process"/>
    <property type="evidence" value="ECO:0000316"/>
    <property type="project" value="EcoliWiki"/>
</dbReference>
<dbReference type="GO" id="GO:0009098">
    <property type="term" value="P:L-leucine biosynthetic process"/>
    <property type="evidence" value="ECO:0000315"/>
    <property type="project" value="EcoCyc"/>
</dbReference>
<dbReference type="GO" id="GO:0033585">
    <property type="term" value="P:L-phenylalanine biosynthetic process from chorismate via phenylpyruvate"/>
    <property type="evidence" value="ECO:0000314"/>
    <property type="project" value="EcoCyc"/>
</dbReference>
<dbReference type="GO" id="GO:0019292">
    <property type="term" value="P:L-tyrosine biosynthetic process from chorismate via 4-hydroxyphenylpyruvate"/>
    <property type="evidence" value="ECO:0000314"/>
    <property type="project" value="EcoCyc"/>
</dbReference>
<dbReference type="CDD" id="cd00609">
    <property type="entry name" value="AAT_like"/>
    <property type="match status" value="1"/>
</dbReference>
<dbReference type="FunFam" id="3.40.640.10:FF:000015">
    <property type="entry name" value="Aspartate aminotransferase"/>
    <property type="match status" value="1"/>
</dbReference>
<dbReference type="FunFam" id="3.90.1150.10:FF:000001">
    <property type="entry name" value="Aspartate aminotransferase"/>
    <property type="match status" value="1"/>
</dbReference>
<dbReference type="Gene3D" id="3.90.1150.10">
    <property type="entry name" value="Aspartate Aminotransferase, domain 1"/>
    <property type="match status" value="1"/>
</dbReference>
<dbReference type="Gene3D" id="3.40.640.10">
    <property type="entry name" value="Type I PLP-dependent aspartate aminotransferase-like (Major domain)"/>
    <property type="match status" value="1"/>
</dbReference>
<dbReference type="InterPro" id="IPR004839">
    <property type="entry name" value="Aminotransferase_I/II_large"/>
</dbReference>
<dbReference type="InterPro" id="IPR000796">
    <property type="entry name" value="Asp_trans"/>
</dbReference>
<dbReference type="InterPro" id="IPR004838">
    <property type="entry name" value="NHTrfase_class1_PyrdxlP-BS"/>
</dbReference>
<dbReference type="InterPro" id="IPR015424">
    <property type="entry name" value="PyrdxlP-dep_Trfase"/>
</dbReference>
<dbReference type="InterPro" id="IPR015421">
    <property type="entry name" value="PyrdxlP-dep_Trfase_major"/>
</dbReference>
<dbReference type="InterPro" id="IPR015422">
    <property type="entry name" value="PyrdxlP-dep_Trfase_small"/>
</dbReference>
<dbReference type="NCBIfam" id="NF006719">
    <property type="entry name" value="PRK09257.1"/>
    <property type="match status" value="1"/>
</dbReference>
<dbReference type="PANTHER" id="PTHR11879:SF37">
    <property type="entry name" value="AROMATIC-AMINO-ACID AMINOTRANSFERASE"/>
    <property type="match status" value="1"/>
</dbReference>
<dbReference type="PANTHER" id="PTHR11879">
    <property type="entry name" value="ASPARTATE AMINOTRANSFERASE"/>
    <property type="match status" value="1"/>
</dbReference>
<dbReference type="Pfam" id="PF00155">
    <property type="entry name" value="Aminotran_1_2"/>
    <property type="match status" value="1"/>
</dbReference>
<dbReference type="PRINTS" id="PR00799">
    <property type="entry name" value="TRANSAMINASE"/>
</dbReference>
<dbReference type="SUPFAM" id="SSF53383">
    <property type="entry name" value="PLP-dependent transferases"/>
    <property type="match status" value="1"/>
</dbReference>
<dbReference type="PROSITE" id="PS00105">
    <property type="entry name" value="AA_TRANSFER_CLASS_1"/>
    <property type="match status" value="1"/>
</dbReference>
<organism>
    <name type="scientific">Escherichia coli (strain K12)</name>
    <dbReference type="NCBI Taxonomy" id="83333"/>
    <lineage>
        <taxon>Bacteria</taxon>
        <taxon>Pseudomonadati</taxon>
        <taxon>Pseudomonadota</taxon>
        <taxon>Gammaproteobacteria</taxon>
        <taxon>Enterobacterales</taxon>
        <taxon>Enterobacteriaceae</taxon>
        <taxon>Escherichia</taxon>
    </lineage>
</organism>
<protein>
    <recommendedName>
        <fullName>Aromatic-amino-acid aminotransferase</fullName>
        <shortName>ARAT</shortName>
        <shortName>AROAT</shortName>
        <ecNumber>2.6.1.57</ecNumber>
    </recommendedName>
    <alternativeName>
        <fullName>Beta-methylphenylalanine transaminase</fullName>
        <ecNumber>2.6.1.107</ecNumber>
    </alternativeName>
</protein>
<keyword id="KW-0002">3D-structure</keyword>
<keyword id="KW-0028">Amino-acid biosynthesis</keyword>
<keyword id="KW-0032">Aminotransferase</keyword>
<keyword id="KW-0057">Aromatic amino acid biosynthesis</keyword>
<keyword id="KW-0963">Cytoplasm</keyword>
<keyword id="KW-0663">Pyridoxal phosphate</keyword>
<keyword id="KW-1185">Reference proteome</keyword>
<keyword id="KW-0808">Transferase</keyword>
<sequence length="397" mass="43538">MFQKVDAYAGDPILTLMERFKEDPRSDKVNLSIGLYYNEDGIIPQLQAVAEAEARLNAQPHGASLYLPMEGLNCYRHAIAPLLFGADHPVLKQQRVATIQTLGGSGALKVGADFLKRYFPESGVWVSDPTWENHVAIFAGAGFEVSTYPWYDEATNGVRFNDLLATLKTLPARSIVLLHPCCHNPTGADLTNDQWDAVIEILKARELIPFLDIAYQGFGAGMEEDAYAIRAIASAGLPALVSNSFSKIFSLYGERVGGLSVMCEDAEAAGRVLGQLKATVRRNYSSPPNFGAQVVAAVLNDEALKASWLAEVEEMRTRILAMRQELVKVLSTEMPERNFDYLLNQRGMFSYTGLSAAQVDRLREEFGVYLIASGRMCVAGLNTANVQRVAKAFAAVM</sequence>
<reference key="1">
    <citation type="journal article" date="1986" name="Biochem. J.">
        <title>The cloning and sequence analysis of the aspC and tyrB genes from Escherichia coli K12. Comparison of the primary structures of the aspartate aminotransferase and aromatic aminotransferase of E. coli with those of the pig aspartate aminotransferase isoenzymes.</title>
        <authorList>
            <person name="Fotheringham I.G."/>
            <person name="Dacey S.A."/>
            <person name="Taylor P.P."/>
            <person name="Smith T.J."/>
            <person name="Hunter M.G."/>
            <person name="Finlay M.E."/>
            <person name="Primrose S.B."/>
            <person name="Parker D.M."/>
            <person name="Edwards R.M."/>
        </authorList>
    </citation>
    <scope>NUCLEOTIDE SEQUENCE [GENOMIC DNA]</scope>
</reference>
<reference key="2">
    <citation type="journal article" date="1985" name="Biochem. Biophys. Res. Commun.">
        <title>Aromatic amino acid aminotransferase of Escherichia coli: nucleotide sequence of the tyrB gene.</title>
        <authorList>
            <person name="Kuramitsu S."/>
            <person name="Inoue K."/>
            <person name="Ogawa T."/>
            <person name="Ogawa H."/>
            <person name="Kagamiyama H."/>
        </authorList>
    </citation>
    <scope>NUCLEOTIDE SEQUENCE [GENOMIC DNA]</scope>
    <source>
        <strain>K12</strain>
    </source>
</reference>
<reference key="3">
    <citation type="journal article" date="1993" name="Nucleic Acids Res.">
        <title>Analysis of the Escherichia coli genome. IV. DNA sequence of the region from 89.2 to 92.8 minutes.</title>
        <authorList>
            <person name="Blattner F.R."/>
            <person name="Burland V.D."/>
            <person name="Plunkett G. III"/>
            <person name="Sofia H.J."/>
            <person name="Daniels D.L."/>
        </authorList>
    </citation>
    <scope>NUCLEOTIDE SEQUENCE [LARGE SCALE GENOMIC DNA]</scope>
    <source>
        <strain>K12 / MG1655 / ATCC 47076</strain>
    </source>
</reference>
<reference key="4">
    <citation type="journal article" date="1997" name="Science">
        <title>The complete genome sequence of Escherichia coli K-12.</title>
        <authorList>
            <person name="Blattner F.R."/>
            <person name="Plunkett G. III"/>
            <person name="Bloch C.A."/>
            <person name="Perna N.T."/>
            <person name="Burland V."/>
            <person name="Riley M."/>
            <person name="Collado-Vides J."/>
            <person name="Glasner J.D."/>
            <person name="Rode C.K."/>
            <person name="Mayhew G.F."/>
            <person name="Gregor J."/>
            <person name="Davis N.W."/>
            <person name="Kirkpatrick H.A."/>
            <person name="Goeden M.A."/>
            <person name="Rose D.J."/>
            <person name="Mau B."/>
            <person name="Shao Y."/>
        </authorList>
    </citation>
    <scope>NUCLEOTIDE SEQUENCE [LARGE SCALE GENOMIC DNA]</scope>
    <source>
        <strain>K12 / MG1655 / ATCC 47076</strain>
    </source>
</reference>
<reference key="5">
    <citation type="journal article" date="2006" name="Mol. Syst. Biol.">
        <title>Highly accurate genome sequences of Escherichia coli K-12 strains MG1655 and W3110.</title>
        <authorList>
            <person name="Hayashi K."/>
            <person name="Morooka N."/>
            <person name="Yamamoto Y."/>
            <person name="Fujita K."/>
            <person name="Isono K."/>
            <person name="Choi S."/>
            <person name="Ohtsubo E."/>
            <person name="Baba T."/>
            <person name="Wanner B.L."/>
            <person name="Mori H."/>
            <person name="Horiuchi T."/>
        </authorList>
    </citation>
    <scope>NUCLEOTIDE SEQUENCE [LARGE SCALE GENOMIC DNA]</scope>
    <source>
        <strain>K12 / W3110 / ATCC 27325 / DSM 5911</strain>
    </source>
</reference>
<reference key="6">
    <citation type="journal article" date="1987" name="J. Bacteriol.">
        <title>Molecular analysis of the regulatory region of the Escherichia coli K-12 tyrB gene.</title>
        <authorList>
            <person name="Yang J."/>
            <person name="Pittard J."/>
        </authorList>
    </citation>
    <scope>NUCLEOTIDE SEQUENCE [GENOMIC DNA] OF 1-39</scope>
    <source>
        <strain>K12</strain>
    </source>
</reference>
<reference key="7">
    <citation type="journal article" date="1997" name="Electrophoresis">
        <title>Escherichia coli proteome analysis using the gene-protein database.</title>
        <authorList>
            <person name="VanBogelen R.A."/>
            <person name="Abshire K.Z."/>
            <person name="Moldover B."/>
            <person name="Olson E.R."/>
            <person name="Neidhardt F.C."/>
        </authorList>
    </citation>
    <scope>IDENTIFICATION BY 2D-GEL</scope>
</reference>
<reference key="8">
    <citation type="journal article" date="2009" name="ChemBioChem">
        <title>In vitro characterization of enzymes involved in the synthesis of nonproteinogenic residue (2S,3S)-beta-methylphenylalanine in glycopeptide antibiotic mannopeptimycin.</title>
        <authorList>
            <person name="Huang Y.T."/>
            <person name="Lyu S.Y."/>
            <person name="Chuang P.H."/>
            <person name="Hsu N.S."/>
            <person name="Li Y.S."/>
            <person name="Chan H.C."/>
            <person name="Huang C.J."/>
            <person name="Liu Y.C."/>
            <person name="Wu C.J."/>
            <person name="Yang W.B."/>
            <person name="Li T.L."/>
        </authorList>
    </citation>
    <scope>FUNCTION AS BETA-METHYLPHENYLALANINE TRANSAMINASE</scope>
    <scope>CATALYTIC ACTIVITY</scope>
</reference>
<reference key="9">
    <citation type="journal article" date="1999" name="Acta Crystallogr. D">
        <title>Crystallization and preliminary crystallographic analysis of the Escherichia coli tyrosine aminotransferase.</title>
        <authorList>
            <person name="Ko T.-P."/>
            <person name="Wu S.-P."/>
            <person name="Yang W.-Z."/>
            <person name="Tsai H."/>
            <person name="Yuan H.S."/>
        </authorList>
    </citation>
    <scope>X-RAY CRYSTALLOGRAPHY (3.5 ANGSTROMS)</scope>
</reference>
<feature type="chain" id="PRO_0000123892" description="Aromatic-amino-acid aminotransferase">
    <location>
        <begin position="1"/>
        <end position="397"/>
    </location>
</feature>
<feature type="binding site" evidence="1">
    <location>
        <position position="34"/>
    </location>
    <ligand>
        <name>substrate</name>
    </ligand>
</feature>
<feature type="binding site" evidence="1">
    <location>
        <position position="66"/>
    </location>
    <ligand>
        <name>substrate</name>
    </ligand>
</feature>
<feature type="binding site" evidence="1">
    <location>
        <position position="131"/>
    </location>
    <ligand>
        <name>substrate</name>
    </ligand>
</feature>
<feature type="binding site" evidence="1">
    <location>
        <position position="184"/>
    </location>
    <ligand>
        <name>substrate</name>
    </ligand>
</feature>
<feature type="binding site" evidence="1">
    <location>
        <position position="281"/>
    </location>
    <ligand>
        <name>substrate</name>
    </ligand>
</feature>
<feature type="binding site" evidence="1">
    <location>
        <position position="375"/>
    </location>
    <ligand>
        <name>substrate</name>
    </ligand>
</feature>
<feature type="modified residue" description="N6-(pyridoxal phosphate)lysine">
    <location>
        <position position="247"/>
    </location>
</feature>
<feature type="helix" evidence="4">
    <location>
        <begin position="12"/>
        <end position="21"/>
    </location>
</feature>
<feature type="helix" evidence="4">
    <location>
        <begin position="47"/>
        <end position="58"/>
    </location>
</feature>
<feature type="strand" evidence="5">
    <location>
        <begin position="62"/>
        <end position="64"/>
    </location>
</feature>
<feature type="helix" evidence="4">
    <location>
        <begin position="73"/>
        <end position="84"/>
    </location>
</feature>
<feature type="helix" evidence="4">
    <location>
        <begin position="89"/>
        <end position="92"/>
    </location>
</feature>
<feature type="strand" evidence="4">
    <location>
        <begin position="96"/>
        <end position="102"/>
    </location>
</feature>
<feature type="helix" evidence="4">
    <location>
        <begin position="103"/>
        <end position="118"/>
    </location>
</feature>
<feature type="strand" evidence="4">
    <location>
        <begin position="124"/>
        <end position="129"/>
    </location>
</feature>
<feature type="helix" evidence="4">
    <location>
        <begin position="132"/>
        <end position="140"/>
    </location>
</feature>
<feature type="strand" evidence="4">
    <location>
        <begin position="145"/>
        <end position="148"/>
    </location>
</feature>
<feature type="turn" evidence="4">
    <location>
        <begin position="153"/>
        <end position="156"/>
    </location>
</feature>
<feature type="helix" evidence="4">
    <location>
        <begin position="160"/>
        <end position="167"/>
    </location>
</feature>
<feature type="strand" evidence="4">
    <location>
        <begin position="175"/>
        <end position="178"/>
    </location>
</feature>
<feature type="strand" evidence="4">
    <location>
        <begin position="180"/>
        <end position="182"/>
    </location>
</feature>
<feature type="turn" evidence="4">
    <location>
        <begin position="184"/>
        <end position="186"/>
    </location>
</feature>
<feature type="helix" evidence="4">
    <location>
        <begin position="192"/>
        <end position="204"/>
    </location>
</feature>
<feature type="strand" evidence="4">
    <location>
        <begin position="208"/>
        <end position="214"/>
    </location>
</feature>
<feature type="strand" evidence="4">
    <location>
        <begin position="218"/>
        <end position="220"/>
    </location>
</feature>
<feature type="helix" evidence="4">
    <location>
        <begin position="224"/>
        <end position="226"/>
    </location>
</feature>
<feature type="helix" evidence="4">
    <location>
        <begin position="227"/>
        <end position="234"/>
    </location>
</feature>
<feature type="strand" evidence="4">
    <location>
        <begin position="239"/>
        <end position="244"/>
    </location>
</feature>
<feature type="turn" evidence="4">
    <location>
        <begin position="246"/>
        <end position="250"/>
    </location>
</feature>
<feature type="helix" evidence="4">
    <location>
        <begin position="252"/>
        <end position="254"/>
    </location>
</feature>
<feature type="strand" evidence="4">
    <location>
        <begin position="257"/>
        <end position="262"/>
    </location>
</feature>
<feature type="helix" evidence="4">
    <location>
        <begin position="266"/>
        <end position="281"/>
    </location>
</feature>
<feature type="turn" evidence="4">
    <location>
        <begin position="282"/>
        <end position="284"/>
    </location>
</feature>
<feature type="helix" evidence="4">
    <location>
        <begin position="290"/>
        <end position="299"/>
    </location>
</feature>
<feature type="helix" evidence="4">
    <location>
        <begin position="302"/>
        <end position="333"/>
    </location>
</feature>
<feature type="helix" evidence="4">
    <location>
        <begin position="341"/>
        <end position="344"/>
    </location>
</feature>
<feature type="strand" evidence="4">
    <location>
        <begin position="347"/>
        <end position="351"/>
    </location>
</feature>
<feature type="helix" evidence="4">
    <location>
        <begin position="356"/>
        <end position="364"/>
    </location>
</feature>
<feature type="strand" evidence="5">
    <location>
        <begin position="372"/>
        <end position="374"/>
    </location>
</feature>
<feature type="strand" evidence="4">
    <location>
        <begin position="375"/>
        <end position="377"/>
    </location>
</feature>
<feature type="helix" evidence="4">
    <location>
        <begin position="378"/>
        <end position="380"/>
    </location>
</feature>
<feature type="turn" evidence="4">
    <location>
        <begin position="383"/>
        <end position="385"/>
    </location>
</feature>
<feature type="helix" evidence="4">
    <location>
        <begin position="386"/>
        <end position="396"/>
    </location>
</feature>
<accession>P04693</accession>
<accession>Q2M6Q0</accession>
<name>TYRB_ECOLI</name>
<comment type="function">
    <text evidence="2">Broad-specificity enzyme that catalyzes the transamination of 2-ketoisocaproate, p-hydroxyphenylpyruvate, and phenylpyruvate to yield leucine, tyrosine, and phenylalanine, respectively. In vitro, is able to catalyze the conversion of beta-methyl phenylpyruvate to the nonproteinogenic amino acid (2S,3S)-beta-methyl-phenylalanine, a building block of the antibiotic mannopeptimycin produced by Streptomyces hygroscopicus NRRL3085.</text>
</comment>
<comment type="catalytic activity">
    <reaction evidence="2">
        <text>an aromatic L-alpha-amino acid + 2-oxoglutarate = an aromatic oxo-acid + L-glutamate</text>
        <dbReference type="Rhea" id="RHEA:17533"/>
        <dbReference type="ChEBI" id="CHEBI:16810"/>
        <dbReference type="ChEBI" id="CHEBI:29985"/>
        <dbReference type="ChEBI" id="CHEBI:73309"/>
        <dbReference type="ChEBI" id="CHEBI:84824"/>
        <dbReference type="EC" id="2.6.1.57"/>
    </reaction>
</comment>
<comment type="catalytic activity">
    <reaction evidence="2">
        <text>(3S)-3-methyl-L-phenylalanine + 2-oxoglutarate = (3S)-2-oxo-3-phenylbutanoate + L-glutamate</text>
        <dbReference type="Rhea" id="RHEA:39911"/>
        <dbReference type="ChEBI" id="CHEBI:16810"/>
        <dbReference type="ChEBI" id="CHEBI:29985"/>
        <dbReference type="ChEBI" id="CHEBI:74119"/>
        <dbReference type="ChEBI" id="CHEBI:76864"/>
        <dbReference type="EC" id="2.6.1.107"/>
    </reaction>
</comment>
<comment type="cofactor">
    <cofactor>
        <name>pyridoxal 5'-phosphate</name>
        <dbReference type="ChEBI" id="CHEBI:597326"/>
    </cofactor>
</comment>
<comment type="pathway">
    <text>Amino-acid biosynthesis; L-phenylalanine biosynthesis; L-phenylalanine from phenylpyruvate (ArAT route): step 1/1.</text>
</comment>
<comment type="pathway">
    <text>Amino-acid biosynthesis; L-tyrosine biosynthesis; L-tyrosine from (4-hydroxyphenyl)pyruvate: step 1/1.</text>
</comment>
<comment type="subunit">
    <text>Homodimer.</text>
</comment>
<comment type="subcellular location">
    <subcellularLocation>
        <location>Cytoplasm</location>
    </subcellularLocation>
</comment>
<comment type="similarity">
    <text evidence="3">Belongs to the class-I pyridoxal-phosphate-dependent aminotransferase family.</text>
</comment>
<proteinExistence type="evidence at protein level"/>
<gene>
    <name type="primary">tyrB</name>
    <name type="ordered locus">b4054</name>
    <name type="ordered locus">JW4014</name>
</gene>